<proteinExistence type="evidence at transcript level"/>
<evidence type="ECO:0000250" key="1">
    <source>
        <dbReference type="UniProtKB" id="Q7L5N1"/>
    </source>
</evidence>
<evidence type="ECO:0000255" key="2">
    <source>
        <dbReference type="PROSITE-ProRule" id="PRU01182"/>
    </source>
</evidence>
<evidence type="ECO:0000305" key="3"/>
<sequence>MAATAAAANGTGGSSGMEVDAAVVPSVMASGVTGSVSVALHPLVILNISDHWIRMRSQEGRPMQVIGALIGKQEGRNIEVMNSFELLSHTVEEKIIIDKEYYYTKEEQFKQVFKELDFLGWYTTGGPPDPSDIHVHKQVCEIIESPLFLKLNPMTKHTDLPVSVFESVIDIINGEATMLFAELTYTLATEEAERIGVDHVARMTATGSGENSTVAEHLIAQHSAIKMLHSRVKLILEYVKASEAGEVPFNHEILREAYALCHCLPVLSTDKFKTDFYDQCNDVGLMAYLGTITKTCNTMNQFVNKFNVLYDRQGIGRRMRGLFF</sequence>
<dbReference type="EMBL" id="BC149601">
    <property type="protein sequence ID" value="AAI49602.1"/>
    <property type="molecule type" value="mRNA"/>
</dbReference>
<dbReference type="RefSeq" id="NP_001095433.1">
    <property type="nucleotide sequence ID" value="NM_001101963.2"/>
</dbReference>
<dbReference type="SMR" id="A6QQ21"/>
<dbReference type="FunCoup" id="A6QQ21">
    <property type="interactions" value="2753"/>
</dbReference>
<dbReference type="STRING" id="9913.ENSBTAP00000003725"/>
<dbReference type="PaxDb" id="9913-ENSBTAP00000003725"/>
<dbReference type="GeneID" id="512756"/>
<dbReference type="KEGG" id="bta:512756"/>
<dbReference type="CTD" id="10980"/>
<dbReference type="eggNOG" id="KOG3050">
    <property type="taxonomic scope" value="Eukaryota"/>
</dbReference>
<dbReference type="InParanoid" id="A6QQ21"/>
<dbReference type="OrthoDB" id="1378at2759"/>
<dbReference type="Proteomes" id="UP000009136">
    <property type="component" value="Unplaced"/>
</dbReference>
<dbReference type="GO" id="GO:0008180">
    <property type="term" value="C:COP9 signalosome"/>
    <property type="evidence" value="ECO:0000318"/>
    <property type="project" value="GO_Central"/>
</dbReference>
<dbReference type="GO" id="GO:0005737">
    <property type="term" value="C:cytoplasm"/>
    <property type="evidence" value="ECO:0007669"/>
    <property type="project" value="UniProtKB-SubCell"/>
</dbReference>
<dbReference type="GO" id="GO:0008237">
    <property type="term" value="F:metallopeptidase activity"/>
    <property type="evidence" value="ECO:0007669"/>
    <property type="project" value="InterPro"/>
</dbReference>
<dbReference type="GO" id="GO:0000338">
    <property type="term" value="P:protein deneddylation"/>
    <property type="evidence" value="ECO:0007669"/>
    <property type="project" value="InterPro"/>
</dbReference>
<dbReference type="CDD" id="cd08063">
    <property type="entry name" value="MPN_CSN6"/>
    <property type="match status" value="1"/>
</dbReference>
<dbReference type="FunFam" id="3.40.140.10:FF:000017">
    <property type="entry name" value="COP9 signalosome complex subunit 6"/>
    <property type="match status" value="1"/>
</dbReference>
<dbReference type="Gene3D" id="3.40.140.10">
    <property type="entry name" value="Cytidine Deaminase, domain 2"/>
    <property type="match status" value="1"/>
</dbReference>
<dbReference type="InterPro" id="IPR024969">
    <property type="entry name" value="EIF3F/CSN6-like_C"/>
</dbReference>
<dbReference type="InterPro" id="IPR000555">
    <property type="entry name" value="JAMM/MPN+_dom"/>
</dbReference>
<dbReference type="InterPro" id="IPR037518">
    <property type="entry name" value="MPN"/>
</dbReference>
<dbReference type="InterPro" id="IPR033859">
    <property type="entry name" value="MPN_CSN6"/>
</dbReference>
<dbReference type="PANTHER" id="PTHR10540:SF8">
    <property type="entry name" value="COP9 SIGNALOSOME COMPLEX SUBUNIT 6"/>
    <property type="match status" value="1"/>
</dbReference>
<dbReference type="PANTHER" id="PTHR10540">
    <property type="entry name" value="EUKARYOTIC TRANSLATION INITIATION FACTOR 3 SUBUNIT F-RELATED"/>
    <property type="match status" value="1"/>
</dbReference>
<dbReference type="Pfam" id="PF01398">
    <property type="entry name" value="JAB"/>
    <property type="match status" value="1"/>
</dbReference>
<dbReference type="Pfam" id="PF13012">
    <property type="entry name" value="MitMem_reg"/>
    <property type="match status" value="1"/>
</dbReference>
<dbReference type="SMART" id="SM00232">
    <property type="entry name" value="JAB_MPN"/>
    <property type="match status" value="1"/>
</dbReference>
<dbReference type="PROSITE" id="PS50249">
    <property type="entry name" value="MPN"/>
    <property type="match status" value="1"/>
</dbReference>
<protein>
    <recommendedName>
        <fullName>COP9 signalosome complex subunit 6</fullName>
        <shortName>SGN6</shortName>
        <shortName>Signalosome subunit 6</shortName>
    </recommendedName>
</protein>
<name>CSN6_BOVIN</name>
<reference key="1">
    <citation type="submission" date="2007-07" db="EMBL/GenBank/DDBJ databases">
        <authorList>
            <consortium name="NIH - Mammalian Gene Collection (MGC) project"/>
        </authorList>
    </citation>
    <scope>NUCLEOTIDE SEQUENCE [LARGE SCALE MRNA]</scope>
    <source>
        <strain>Hereford</strain>
        <tissue>Hypothalamus</tissue>
    </source>
</reference>
<accession>A6QQ21</accession>
<feature type="chain" id="PRO_0000331507" description="COP9 signalosome complex subunit 6">
    <location>
        <begin position="1"/>
        <end position="324"/>
    </location>
</feature>
<feature type="domain" description="MPN" evidence="2">
    <location>
        <begin position="38"/>
        <end position="171"/>
    </location>
</feature>
<keyword id="KW-0963">Cytoplasm</keyword>
<keyword id="KW-0539">Nucleus</keyword>
<keyword id="KW-1185">Reference proteome</keyword>
<keyword id="KW-0736">Signalosome</keyword>
<organism>
    <name type="scientific">Bos taurus</name>
    <name type="common">Bovine</name>
    <dbReference type="NCBI Taxonomy" id="9913"/>
    <lineage>
        <taxon>Eukaryota</taxon>
        <taxon>Metazoa</taxon>
        <taxon>Chordata</taxon>
        <taxon>Craniata</taxon>
        <taxon>Vertebrata</taxon>
        <taxon>Euteleostomi</taxon>
        <taxon>Mammalia</taxon>
        <taxon>Eutheria</taxon>
        <taxon>Laurasiatheria</taxon>
        <taxon>Artiodactyla</taxon>
        <taxon>Ruminantia</taxon>
        <taxon>Pecora</taxon>
        <taxon>Bovidae</taxon>
        <taxon>Bovinae</taxon>
        <taxon>Bos</taxon>
    </lineage>
</organism>
<gene>
    <name type="primary">COPS6</name>
</gene>
<comment type="function">
    <text evidence="1">Component of the COP9 signalosome complex (CSN), a complex involved in various cellular and developmental processes (By similarity). The CSN complex is an essential regulator of the ubiquitin (Ubl) conjugation pathway by mediating the deneddylation of the cullin subunits of SCF-type E3 ligase complexes, leading to decrease the Ubl ligase activity of SCF-type complexes such as SCF, CSA or DDB2 (By similarity). The complex is also involved in phosphorylation of p53/TP53, c-jun/JUN, IkappaBalpha/NFKBIA, ITPK1 and IRF8, possibly via its association with CK2 and PKD kinases (By similarity). CSN-dependent phosphorylation of TP53 and JUN promotes and protects degradation by the Ubl system, respectively (By similarity). Has some glucocorticoid receptor-responsive activity (By similarity). Stabilizes COP1 through reducing COP1 auto-ubiquitination and decelerating COP1 turnover rate, hence regulates the ubiquitination of COP1 targets, including SFN (By similarity).</text>
</comment>
<comment type="subunit">
    <text evidence="1">Component of the CSN complex, composed of COPS1/GPS1, COPS2, COPS3, COPS4, COPS5, COPS6, COPS7 (COPS7A or COPS7B), COPS8 and COPS9 (By similarity). In the complex, it probably interacts directly with COPS2, COPS4, COPS5, COPS7 (COPS7A or COPS7B) and COPS9 (By similarity). Interacts with the translation initiation factor EIF3S6 (By similarity). Interacts weakly with RBX1 (By similarity). Directly interacts with COP1 and 14-3-3 protein sigma/SFN (By similarity). Interacts with ERCC6 (By similarity).</text>
</comment>
<comment type="subcellular location">
    <subcellularLocation>
        <location evidence="1">Cytoplasm</location>
    </subcellularLocation>
    <subcellularLocation>
        <location evidence="1">Nucleus</location>
    </subcellularLocation>
</comment>
<comment type="similarity">
    <text evidence="3">Belongs to the peptidase M67A family. CSN6 subfamily.</text>
</comment>
<comment type="caution">
    <text evidence="3">Although related to the peptidase M67A family, it lacks the JAMM motif that probably constitutes the catalytic center and therefore it probably does not have a protease activity.</text>
</comment>